<gene>
    <name evidence="1" type="primary">hldD</name>
    <name type="ordered locus">SBO_3624</name>
</gene>
<reference key="1">
    <citation type="journal article" date="2005" name="Nucleic Acids Res.">
        <title>Genome dynamics and diversity of Shigella species, the etiologic agents of bacillary dysentery.</title>
        <authorList>
            <person name="Yang F."/>
            <person name="Yang J."/>
            <person name="Zhang X."/>
            <person name="Chen L."/>
            <person name="Jiang Y."/>
            <person name="Yan Y."/>
            <person name="Tang X."/>
            <person name="Wang J."/>
            <person name="Xiong Z."/>
            <person name="Dong J."/>
            <person name="Xue Y."/>
            <person name="Zhu Y."/>
            <person name="Xu X."/>
            <person name="Sun L."/>
            <person name="Chen S."/>
            <person name="Nie H."/>
            <person name="Peng J."/>
            <person name="Xu J."/>
            <person name="Wang Y."/>
            <person name="Yuan Z."/>
            <person name="Wen Y."/>
            <person name="Yao Z."/>
            <person name="Shen Y."/>
            <person name="Qiang B."/>
            <person name="Hou Y."/>
            <person name="Yu J."/>
            <person name="Jin Q."/>
        </authorList>
    </citation>
    <scope>NUCLEOTIDE SEQUENCE [LARGE SCALE GENOMIC DNA]</scope>
    <source>
        <strain>Sb227</strain>
    </source>
</reference>
<name>HLDD_SHIBS</name>
<comment type="function">
    <text evidence="1">Catalyzes the interconversion between ADP-D-glycero-beta-D-manno-heptose and ADP-L-glycero-beta-D-manno-heptose via an epimerization at carbon 6 of the heptose.</text>
</comment>
<comment type="catalytic activity">
    <reaction evidence="1">
        <text>ADP-D-glycero-beta-D-manno-heptose = ADP-L-glycero-beta-D-manno-heptose</text>
        <dbReference type="Rhea" id="RHEA:17577"/>
        <dbReference type="ChEBI" id="CHEBI:59967"/>
        <dbReference type="ChEBI" id="CHEBI:61506"/>
        <dbReference type="EC" id="5.1.3.20"/>
    </reaction>
</comment>
<comment type="cofactor">
    <cofactor evidence="1">
        <name>NADP(+)</name>
        <dbReference type="ChEBI" id="CHEBI:58349"/>
    </cofactor>
    <text evidence="1">Binds 1 NADP(+) per subunit.</text>
</comment>
<comment type="pathway">
    <text evidence="1">Nucleotide-sugar biosynthesis; ADP-L-glycero-beta-D-manno-heptose biosynthesis; ADP-L-glycero-beta-D-manno-heptose from D-glycero-beta-D-manno-heptose 7-phosphate: step 4/4.</text>
</comment>
<comment type="subunit">
    <text evidence="1">Homopentamer.</text>
</comment>
<comment type="domain">
    <text evidence="1">Contains a large N-terminal NADP-binding domain, and a smaller C-terminal substrate-binding domain.</text>
</comment>
<comment type="similarity">
    <text evidence="1">Belongs to the NAD(P)-dependent epimerase/dehydratase family. HldD subfamily.</text>
</comment>
<sequence>MIIVTGGAGFIGSNIVKALNDKGITDILVVDNLKDGTKFVNLVDLDIADYMDKEDFLIQIMAGEEFGDVEAIFHEGACSSTTEWDGKYMMDNNYQYSKELLHYCLEREIPFLYASSAATYGGRTSDFIESREYEKPLNVYGYSKFLFDEYVRQILPEANSQIVGFRYFNVYGPREGHKGSMASVAFHLNTQLNNGESPKLFEGSENFKRDFVYVGDVADVNLWFLENGVSGIFNLGTGRAESFQAVADATLAYHKKGQIEYIPFPDKLKGRYQAFTQADLTNLRAAGYDKPFKTVAEGVTEYMAWLNRDA</sequence>
<protein>
    <recommendedName>
        <fullName evidence="1">ADP-L-glycero-D-manno-heptose-6-epimerase</fullName>
        <ecNumber evidence="1">5.1.3.20</ecNumber>
    </recommendedName>
    <alternativeName>
        <fullName evidence="1">ADP-L-glycero-beta-D-manno-heptose-6-epimerase</fullName>
        <shortName evidence="1">ADP-glyceromanno-heptose 6-epimerase</shortName>
        <shortName evidence="1">ADP-hep 6-epimerase</shortName>
        <shortName evidence="1">AGME</shortName>
    </alternativeName>
</protein>
<proteinExistence type="inferred from homology"/>
<organism>
    <name type="scientific">Shigella boydii serotype 4 (strain Sb227)</name>
    <dbReference type="NCBI Taxonomy" id="300268"/>
    <lineage>
        <taxon>Bacteria</taxon>
        <taxon>Pseudomonadati</taxon>
        <taxon>Pseudomonadota</taxon>
        <taxon>Gammaproteobacteria</taxon>
        <taxon>Enterobacterales</taxon>
        <taxon>Enterobacteriaceae</taxon>
        <taxon>Shigella</taxon>
    </lineage>
</organism>
<keyword id="KW-0007">Acetylation</keyword>
<keyword id="KW-0119">Carbohydrate metabolism</keyword>
<keyword id="KW-0413">Isomerase</keyword>
<keyword id="KW-0521">NADP</keyword>
<dbReference type="EC" id="5.1.3.20" evidence="1"/>
<dbReference type="EMBL" id="CP000036">
    <property type="protein sequence ID" value="ABB68104.1"/>
    <property type="molecule type" value="Genomic_DNA"/>
</dbReference>
<dbReference type="SMR" id="Q31V04"/>
<dbReference type="KEGG" id="sbo:SBO_3624"/>
<dbReference type="HOGENOM" id="CLU_007383_1_3_6"/>
<dbReference type="UniPathway" id="UPA00356">
    <property type="reaction ID" value="UER00440"/>
</dbReference>
<dbReference type="Proteomes" id="UP000007067">
    <property type="component" value="Chromosome"/>
</dbReference>
<dbReference type="GO" id="GO:0008712">
    <property type="term" value="F:ADP-glyceromanno-heptose 6-epimerase activity"/>
    <property type="evidence" value="ECO:0007669"/>
    <property type="project" value="UniProtKB-UniRule"/>
</dbReference>
<dbReference type="GO" id="GO:0050661">
    <property type="term" value="F:NADP binding"/>
    <property type="evidence" value="ECO:0007669"/>
    <property type="project" value="InterPro"/>
</dbReference>
<dbReference type="GO" id="GO:0097171">
    <property type="term" value="P:ADP-L-glycero-beta-D-manno-heptose biosynthetic process"/>
    <property type="evidence" value="ECO:0007669"/>
    <property type="project" value="UniProtKB-UniPathway"/>
</dbReference>
<dbReference type="GO" id="GO:0005975">
    <property type="term" value="P:carbohydrate metabolic process"/>
    <property type="evidence" value="ECO:0007669"/>
    <property type="project" value="UniProtKB-UniRule"/>
</dbReference>
<dbReference type="CDD" id="cd05248">
    <property type="entry name" value="ADP_GME_SDR_e"/>
    <property type="match status" value="1"/>
</dbReference>
<dbReference type="Gene3D" id="3.40.50.720">
    <property type="entry name" value="NAD(P)-binding Rossmann-like Domain"/>
    <property type="match status" value="1"/>
</dbReference>
<dbReference type="Gene3D" id="3.90.25.10">
    <property type="entry name" value="UDP-galactose 4-epimerase, domain 1"/>
    <property type="match status" value="1"/>
</dbReference>
<dbReference type="HAMAP" id="MF_01601">
    <property type="entry name" value="Heptose_epimerase"/>
    <property type="match status" value="1"/>
</dbReference>
<dbReference type="InterPro" id="IPR001509">
    <property type="entry name" value="Epimerase_deHydtase"/>
</dbReference>
<dbReference type="InterPro" id="IPR011912">
    <property type="entry name" value="Heptose_epim"/>
</dbReference>
<dbReference type="InterPro" id="IPR036291">
    <property type="entry name" value="NAD(P)-bd_dom_sf"/>
</dbReference>
<dbReference type="NCBIfam" id="TIGR02197">
    <property type="entry name" value="heptose_epim"/>
    <property type="match status" value="1"/>
</dbReference>
<dbReference type="NCBIfam" id="NF008360">
    <property type="entry name" value="PRK11150.1"/>
    <property type="match status" value="1"/>
</dbReference>
<dbReference type="PANTHER" id="PTHR43103:SF3">
    <property type="entry name" value="ADP-L-GLYCERO-D-MANNO-HEPTOSE-6-EPIMERASE"/>
    <property type="match status" value="1"/>
</dbReference>
<dbReference type="PANTHER" id="PTHR43103">
    <property type="entry name" value="NUCLEOSIDE-DIPHOSPHATE-SUGAR EPIMERASE"/>
    <property type="match status" value="1"/>
</dbReference>
<dbReference type="Pfam" id="PF01370">
    <property type="entry name" value="Epimerase"/>
    <property type="match status" value="1"/>
</dbReference>
<dbReference type="SUPFAM" id="SSF51735">
    <property type="entry name" value="NAD(P)-binding Rossmann-fold domains"/>
    <property type="match status" value="1"/>
</dbReference>
<feature type="chain" id="PRO_0000255742" description="ADP-L-glycero-D-manno-heptose-6-epimerase">
    <location>
        <begin position="1"/>
        <end position="310"/>
    </location>
</feature>
<feature type="active site" description="Proton acceptor" evidence="1">
    <location>
        <position position="140"/>
    </location>
</feature>
<feature type="active site" description="Proton acceptor" evidence="1">
    <location>
        <position position="178"/>
    </location>
</feature>
<feature type="binding site" evidence="1">
    <location>
        <begin position="10"/>
        <end position="11"/>
    </location>
    <ligand>
        <name>NADP(+)</name>
        <dbReference type="ChEBI" id="CHEBI:58349"/>
    </ligand>
</feature>
<feature type="binding site" evidence="1">
    <location>
        <begin position="31"/>
        <end position="32"/>
    </location>
    <ligand>
        <name>NADP(+)</name>
        <dbReference type="ChEBI" id="CHEBI:58349"/>
    </ligand>
</feature>
<feature type="binding site" evidence="1">
    <location>
        <position position="38"/>
    </location>
    <ligand>
        <name>NADP(+)</name>
        <dbReference type="ChEBI" id="CHEBI:58349"/>
    </ligand>
</feature>
<feature type="binding site" evidence="1">
    <location>
        <position position="53"/>
    </location>
    <ligand>
        <name>NADP(+)</name>
        <dbReference type="ChEBI" id="CHEBI:58349"/>
    </ligand>
</feature>
<feature type="binding site" evidence="1">
    <location>
        <begin position="75"/>
        <end position="79"/>
    </location>
    <ligand>
        <name>NADP(+)</name>
        <dbReference type="ChEBI" id="CHEBI:58349"/>
    </ligand>
</feature>
<feature type="binding site" evidence="1">
    <location>
        <position position="92"/>
    </location>
    <ligand>
        <name>NADP(+)</name>
        <dbReference type="ChEBI" id="CHEBI:58349"/>
    </ligand>
</feature>
<feature type="binding site" evidence="1">
    <location>
        <position position="144"/>
    </location>
    <ligand>
        <name>NADP(+)</name>
        <dbReference type="ChEBI" id="CHEBI:58349"/>
    </ligand>
</feature>
<feature type="binding site" evidence="1">
    <location>
        <position position="169"/>
    </location>
    <ligand>
        <name>substrate</name>
    </ligand>
</feature>
<feature type="binding site" evidence="1">
    <location>
        <position position="170"/>
    </location>
    <ligand>
        <name>NADP(+)</name>
        <dbReference type="ChEBI" id="CHEBI:58349"/>
    </ligand>
</feature>
<feature type="binding site" evidence="1">
    <location>
        <position position="178"/>
    </location>
    <ligand>
        <name>NADP(+)</name>
        <dbReference type="ChEBI" id="CHEBI:58349"/>
    </ligand>
</feature>
<feature type="binding site" evidence="1">
    <location>
        <position position="180"/>
    </location>
    <ligand>
        <name>substrate</name>
    </ligand>
</feature>
<feature type="binding site" evidence="1">
    <location>
        <position position="187"/>
    </location>
    <ligand>
        <name>substrate</name>
    </ligand>
</feature>
<feature type="binding site" evidence="1">
    <location>
        <begin position="201"/>
        <end position="204"/>
    </location>
    <ligand>
        <name>substrate</name>
    </ligand>
</feature>
<feature type="binding site" evidence="1">
    <location>
        <position position="209"/>
    </location>
    <ligand>
        <name>substrate</name>
    </ligand>
</feature>
<feature type="binding site" evidence="1">
    <location>
        <position position="272"/>
    </location>
    <ligand>
        <name>substrate</name>
    </ligand>
</feature>
<feature type="modified residue" description="N6-acetyllysine" evidence="1">
    <location>
        <position position="267"/>
    </location>
</feature>
<accession>Q31V04</accession>
<evidence type="ECO:0000255" key="1">
    <source>
        <dbReference type="HAMAP-Rule" id="MF_01601"/>
    </source>
</evidence>